<dbReference type="EMBL" id="D86579">
    <property type="protein sequence ID" value="BAA13126.1"/>
    <property type="molecule type" value="mRNA"/>
</dbReference>
<dbReference type="EMBL" id="AF291672">
    <property type="protein sequence ID" value="AAK25743.1"/>
    <property type="molecule type" value="mRNA"/>
</dbReference>
<dbReference type="PIR" id="G00048">
    <property type="entry name" value="G00048"/>
</dbReference>
<dbReference type="RefSeq" id="NP_001306325.1">
    <property type="nucleotide sequence ID" value="NM_001319396.1"/>
</dbReference>
<dbReference type="RefSeq" id="XP_045222951.1">
    <property type="nucleotide sequence ID" value="XM_045367016.2"/>
</dbReference>
<dbReference type="SMR" id="Q28474"/>
<dbReference type="STRING" id="9541.ENSMFAP00000032075"/>
<dbReference type="GlyCosmos" id="Q28474">
    <property type="glycosylation" value="2 sites, No reported glycans"/>
</dbReference>
<dbReference type="Ensembl" id="ENSMFAT00000006296.2">
    <property type="protein sequence ID" value="ENSMFAP00000032075.2"/>
    <property type="gene ID" value="ENSMFAG00000037063.2"/>
</dbReference>
<dbReference type="GeneID" id="102142487"/>
<dbReference type="eggNOG" id="KOG3656">
    <property type="taxonomic scope" value="Eukaryota"/>
</dbReference>
<dbReference type="GeneTree" id="ENSGT01050000244848"/>
<dbReference type="Proteomes" id="UP000233100">
    <property type="component" value="Chromosome 12"/>
</dbReference>
<dbReference type="Bgee" id="ENSMFAG00000037063">
    <property type="expression patterns" value="Expressed in lymph node and 10 other cell types or tissues"/>
</dbReference>
<dbReference type="GO" id="GO:0070161">
    <property type="term" value="C:anchoring junction"/>
    <property type="evidence" value="ECO:0007669"/>
    <property type="project" value="UniProtKB-SubCell"/>
</dbReference>
<dbReference type="GO" id="GO:0005769">
    <property type="term" value="C:early endosome"/>
    <property type="evidence" value="ECO:0000250"/>
    <property type="project" value="UniProtKB"/>
</dbReference>
<dbReference type="GO" id="GO:0009897">
    <property type="term" value="C:external side of plasma membrane"/>
    <property type="evidence" value="ECO:0007669"/>
    <property type="project" value="TreeGrafter"/>
</dbReference>
<dbReference type="GO" id="GO:0005770">
    <property type="term" value="C:late endosome"/>
    <property type="evidence" value="ECO:0000250"/>
    <property type="project" value="UniProtKB"/>
</dbReference>
<dbReference type="GO" id="GO:0005764">
    <property type="term" value="C:lysosome"/>
    <property type="evidence" value="ECO:0000250"/>
    <property type="project" value="UniProtKB"/>
</dbReference>
<dbReference type="GO" id="GO:0005886">
    <property type="term" value="C:plasma membrane"/>
    <property type="evidence" value="ECO:0000250"/>
    <property type="project" value="UniProtKB"/>
</dbReference>
<dbReference type="GO" id="GO:0019957">
    <property type="term" value="F:C-C chemokine binding"/>
    <property type="evidence" value="ECO:0007669"/>
    <property type="project" value="TreeGrafter"/>
</dbReference>
<dbReference type="GO" id="GO:0016493">
    <property type="term" value="F:C-C chemokine receptor activity"/>
    <property type="evidence" value="ECO:0007669"/>
    <property type="project" value="TreeGrafter"/>
</dbReference>
<dbReference type="GO" id="GO:0038147">
    <property type="term" value="F:C-X-C motif chemokine 12 receptor activity"/>
    <property type="evidence" value="ECO:0000250"/>
    <property type="project" value="UniProtKB"/>
</dbReference>
<dbReference type="GO" id="GO:0007420">
    <property type="term" value="P:brain development"/>
    <property type="evidence" value="ECO:0007669"/>
    <property type="project" value="TreeGrafter"/>
</dbReference>
<dbReference type="GO" id="GO:0019722">
    <property type="term" value="P:calcium-mediated signaling"/>
    <property type="evidence" value="ECO:0007669"/>
    <property type="project" value="TreeGrafter"/>
</dbReference>
<dbReference type="GO" id="GO:0060326">
    <property type="term" value="P:cell chemotaxis"/>
    <property type="evidence" value="ECO:0007669"/>
    <property type="project" value="TreeGrafter"/>
</dbReference>
<dbReference type="GO" id="GO:0071345">
    <property type="term" value="P:cellular response to cytokine stimulus"/>
    <property type="evidence" value="ECO:0000250"/>
    <property type="project" value="UniProtKB"/>
</dbReference>
<dbReference type="GO" id="GO:0038160">
    <property type="term" value="P:CXCL12-activated CXCR4 signaling pathway"/>
    <property type="evidence" value="ECO:0000250"/>
    <property type="project" value="UniProtKB"/>
</dbReference>
<dbReference type="GO" id="GO:0006955">
    <property type="term" value="P:immune response"/>
    <property type="evidence" value="ECO:0007669"/>
    <property type="project" value="TreeGrafter"/>
</dbReference>
<dbReference type="GO" id="GO:0022008">
    <property type="term" value="P:neurogenesis"/>
    <property type="evidence" value="ECO:0007669"/>
    <property type="project" value="TreeGrafter"/>
</dbReference>
<dbReference type="GO" id="GO:0007204">
    <property type="term" value="P:positive regulation of cytosolic calcium ion concentration"/>
    <property type="evidence" value="ECO:0007669"/>
    <property type="project" value="TreeGrafter"/>
</dbReference>
<dbReference type="CDD" id="cd15179">
    <property type="entry name" value="7tmA_CXCR4"/>
    <property type="match status" value="1"/>
</dbReference>
<dbReference type="FunFam" id="1.20.1070.10:FF:000063">
    <property type="entry name" value="C-X-C chemokine receptor type 4"/>
    <property type="match status" value="1"/>
</dbReference>
<dbReference type="Gene3D" id="1.20.1070.10">
    <property type="entry name" value="Rhodopsin 7-helix transmembrane proteins"/>
    <property type="match status" value="1"/>
</dbReference>
<dbReference type="InterPro" id="IPR050119">
    <property type="entry name" value="CCR1-9-like"/>
</dbReference>
<dbReference type="InterPro" id="IPR022726">
    <property type="entry name" value="Chemokine_CXCR4_N_dom"/>
</dbReference>
<dbReference type="InterPro" id="IPR000355">
    <property type="entry name" value="Chemokine_rcpt"/>
</dbReference>
<dbReference type="InterPro" id="IPR001277">
    <property type="entry name" value="CXCR4/ACKR2"/>
</dbReference>
<dbReference type="InterPro" id="IPR000276">
    <property type="entry name" value="GPCR_Rhodpsn"/>
</dbReference>
<dbReference type="InterPro" id="IPR017452">
    <property type="entry name" value="GPCR_Rhodpsn_7TM"/>
</dbReference>
<dbReference type="PANTHER" id="PTHR10489:SF594">
    <property type="entry name" value="C-X-C CHEMOKINE RECEPTOR TYPE 4"/>
    <property type="match status" value="1"/>
</dbReference>
<dbReference type="PANTHER" id="PTHR10489">
    <property type="entry name" value="CELL ADHESION MOLECULE"/>
    <property type="match status" value="1"/>
</dbReference>
<dbReference type="Pfam" id="PF00001">
    <property type="entry name" value="7tm_1"/>
    <property type="match status" value="1"/>
</dbReference>
<dbReference type="Pfam" id="PF12109">
    <property type="entry name" value="CXCR4_N"/>
    <property type="match status" value="1"/>
</dbReference>
<dbReference type="PRINTS" id="PR00657">
    <property type="entry name" value="CCCHEMOKINER"/>
</dbReference>
<dbReference type="PRINTS" id="PR00645">
    <property type="entry name" value="CXCCHMKINER4"/>
</dbReference>
<dbReference type="PRINTS" id="PR00237">
    <property type="entry name" value="GPCRRHODOPSN"/>
</dbReference>
<dbReference type="SUPFAM" id="SSF81321">
    <property type="entry name" value="Family A G protein-coupled receptor-like"/>
    <property type="match status" value="1"/>
</dbReference>
<dbReference type="PROSITE" id="PS00237">
    <property type="entry name" value="G_PROTEIN_RECEP_F1_1"/>
    <property type="match status" value="1"/>
</dbReference>
<dbReference type="PROSITE" id="PS50262">
    <property type="entry name" value="G_PROTEIN_RECEP_F1_2"/>
    <property type="match status" value="1"/>
</dbReference>
<organism>
    <name type="scientific">Macaca fascicularis</name>
    <name type="common">Crab-eating macaque</name>
    <name type="synonym">Cynomolgus monkey</name>
    <dbReference type="NCBI Taxonomy" id="9541"/>
    <lineage>
        <taxon>Eukaryota</taxon>
        <taxon>Metazoa</taxon>
        <taxon>Chordata</taxon>
        <taxon>Craniata</taxon>
        <taxon>Vertebrata</taxon>
        <taxon>Euteleostomi</taxon>
        <taxon>Mammalia</taxon>
        <taxon>Eutheria</taxon>
        <taxon>Euarchontoglires</taxon>
        <taxon>Primates</taxon>
        <taxon>Haplorrhini</taxon>
        <taxon>Catarrhini</taxon>
        <taxon>Cercopithecidae</taxon>
        <taxon>Cercopithecinae</taxon>
        <taxon>Macaca</taxon>
    </lineage>
</organism>
<accession>Q28474</accession>
<accession>Q9BDS5</accession>
<feature type="chain" id="PRO_0000069353" description="C-X-C chemokine receptor type 4">
    <location>
        <begin position="1"/>
        <end position="352"/>
    </location>
</feature>
<feature type="topological domain" description="Extracellular" evidence="7">
    <location>
        <begin position="1"/>
        <end position="38"/>
    </location>
</feature>
<feature type="transmembrane region" description="Helical; Name=1" evidence="2">
    <location>
        <begin position="39"/>
        <end position="63"/>
    </location>
</feature>
<feature type="topological domain" description="Cytoplasmic" evidence="7">
    <location>
        <begin position="64"/>
        <end position="77"/>
    </location>
</feature>
<feature type="transmembrane region" description="Helical; Name=2" evidence="2">
    <location>
        <begin position="78"/>
        <end position="99"/>
    </location>
</feature>
<feature type="topological domain" description="Extracellular" evidence="7">
    <location>
        <begin position="100"/>
        <end position="110"/>
    </location>
</feature>
<feature type="transmembrane region" description="Helical; Name=3" evidence="2">
    <location>
        <begin position="111"/>
        <end position="130"/>
    </location>
</feature>
<feature type="topological domain" description="Cytoplasmic" evidence="7">
    <location>
        <begin position="131"/>
        <end position="154"/>
    </location>
</feature>
<feature type="transmembrane region" description="Helical; Name=4" evidence="2">
    <location>
        <begin position="155"/>
        <end position="174"/>
    </location>
</feature>
<feature type="topological domain" description="Extracellular" evidence="7">
    <location>
        <begin position="175"/>
        <end position="195"/>
    </location>
</feature>
<feature type="transmembrane region" description="Helical; Name=5" evidence="2">
    <location>
        <begin position="196"/>
        <end position="216"/>
    </location>
</feature>
<feature type="topological domain" description="Cytoplasmic" evidence="7">
    <location>
        <begin position="217"/>
        <end position="241"/>
    </location>
</feature>
<feature type="transmembrane region" description="Helical; Name=6" evidence="2">
    <location>
        <begin position="242"/>
        <end position="261"/>
    </location>
</feature>
<feature type="topological domain" description="Extracellular" evidence="7">
    <location>
        <begin position="262"/>
        <end position="282"/>
    </location>
</feature>
<feature type="transmembrane region" description="Helical; Name=7" evidence="2">
    <location>
        <begin position="283"/>
        <end position="302"/>
    </location>
</feature>
<feature type="topological domain" description="Cytoplasmic" evidence="7">
    <location>
        <begin position="303"/>
        <end position="352"/>
    </location>
</feature>
<feature type="region of interest" description="Important for chemokine binding and signaling" evidence="1">
    <location>
        <begin position="1"/>
        <end position="21"/>
    </location>
</feature>
<feature type="region of interest" description="Chemokine binding" evidence="1">
    <location>
        <begin position="94"/>
        <end position="97"/>
    </location>
</feature>
<feature type="region of interest" description="Chemokine binding" evidence="1">
    <location>
        <begin position="113"/>
        <end position="117"/>
    </location>
</feature>
<feature type="region of interest" description="Involved in dimerization; when bound to chemokine" evidence="1">
    <location>
        <begin position="135"/>
        <end position="147"/>
    </location>
</feature>
<feature type="region of interest" description="Chemokine binding, important for signaling" evidence="1">
    <location>
        <begin position="186"/>
        <end position="190"/>
    </location>
</feature>
<feature type="region of interest" description="Involved in dimerization" evidence="1">
    <location>
        <begin position="191"/>
        <end position="210"/>
    </location>
</feature>
<feature type="region of interest" description="Involved in dimerization" evidence="1">
    <location>
        <begin position="266"/>
        <end position="268"/>
    </location>
</feature>
<feature type="region of interest" description="Disordered" evidence="5">
    <location>
        <begin position="329"/>
        <end position="352"/>
    </location>
</feature>
<feature type="short sequence motif" description="Important for signaling" evidence="1">
    <location>
        <begin position="133"/>
        <end position="135"/>
    </location>
</feature>
<feature type="compositionally biased region" description="Low complexity" evidence="5">
    <location>
        <begin position="337"/>
        <end position="352"/>
    </location>
</feature>
<feature type="site" description="Chemokine" evidence="1">
    <location>
        <position position="171"/>
    </location>
</feature>
<feature type="site" description="Chemokine" evidence="1">
    <location>
        <position position="288"/>
    </location>
</feature>
<feature type="modified residue" description="Sulfotyrosine" evidence="2">
    <location>
        <position position="7"/>
    </location>
</feature>
<feature type="modified residue" description="Sulfotyrosine" evidence="2">
    <location>
        <position position="12"/>
    </location>
</feature>
<feature type="modified residue" description="Sulfotyrosine" evidence="2">
    <location>
        <position position="21"/>
    </location>
</feature>
<feature type="modified residue" description="Phosphoserine" evidence="2">
    <location>
        <position position="319"/>
    </location>
</feature>
<feature type="modified residue" description="Phosphoserine" evidence="2">
    <location>
        <position position="321"/>
    </location>
</feature>
<feature type="modified residue" description="Phosphoserine; by PKC and GRK6" evidence="2">
    <location>
        <position position="324"/>
    </location>
</feature>
<feature type="modified residue" description="Phosphoserine; by PKC and GRK6" evidence="2">
    <location>
        <position position="325"/>
    </location>
</feature>
<feature type="modified residue" description="Phosphoserine; by GRK6" evidence="2">
    <location>
        <position position="330"/>
    </location>
</feature>
<feature type="modified residue" description="Phosphoserine; by GRK6" evidence="2">
    <location>
        <position position="339"/>
    </location>
</feature>
<feature type="modified residue" description="Phosphoserine" evidence="2">
    <location>
        <position position="348"/>
    </location>
</feature>
<feature type="modified residue" description="Phosphoserine" evidence="2">
    <location>
        <position position="351"/>
    </location>
</feature>
<feature type="glycosylation site" description="N-linked (GlcNAc...) asparagine" evidence="1">
    <location>
        <position position="11"/>
    </location>
</feature>
<feature type="glycosylation site" description="O-linked (Xyl...) (chondroitin sulfate) serine" evidence="2">
    <location>
        <position position="18"/>
    </location>
</feature>
<feature type="disulfide bond" evidence="4">
    <location>
        <begin position="28"/>
        <end position="274"/>
    </location>
</feature>
<feature type="disulfide bond" evidence="4">
    <location>
        <begin position="109"/>
        <end position="186"/>
    </location>
</feature>
<feature type="cross-link" description="Glycyl lysine isopeptide (Lys-Gly) (interchain with G-Cter in ubiquitin)" evidence="2">
    <location>
        <position position="331"/>
    </location>
</feature>
<feature type="sequence conflict" description="In Ref. 1; BAA13126." evidence="7" ref="1">
    <original>F</original>
    <variation>Y</variation>
    <location>
        <position position="87"/>
    </location>
</feature>
<feature type="sequence conflict" description="In Ref. 1; BAA13126." evidence="7" ref="1">
    <original>K</original>
    <variation>R</variation>
    <location>
        <position position="146"/>
    </location>
</feature>
<feature type="sequence conflict" description="In Ref. 2; AAK25743." evidence="7" ref="2">
    <original>V</original>
    <variation>A</variation>
    <location>
        <position position="214"/>
    </location>
</feature>
<feature type="sequence conflict" description="In Ref. 2; AAK25743." evidence="7" ref="2">
    <original>L</original>
    <variation>P</variation>
    <location>
        <position position="244"/>
    </location>
</feature>
<feature type="sequence conflict" description="In Ref. 1; BAA13126." evidence="7" ref="1">
    <original>A</original>
    <variation>G</variation>
    <location>
        <position position="291"/>
    </location>
</feature>
<sequence>MEGISIYTSDNYTEEMGSGDYDSIKEPCFREENAHFNRIFLPTIYSIIFLTGIVGNGLVILVMGYQKKLRSMTDKYRLHLSVADLLFVITLPFWAVDAVANWYFGNFLCKAVHVIYTVNLYSSVLILAFISLDRYLAIVHATNSQKPRKLLAEKVVYVGVWIPALLLTIPDFIFASVSEADDRYICDRFYPNDLWVVVFQFQHIMVGLILPGIVILSCYCIIISKLSHSKGHQKRKALKTTVILILAFFACWLPYYIGISIDSFILLEIIKQGCEFENTVHKWISITEALAFFHCCLNPILYAFLGAKFKTSAQHALTSVSRGSSLKILSKGKRGGHSSVSTESESSSFHSS</sequence>
<proteinExistence type="evidence at transcript level"/>
<gene>
    <name type="primary">CXCR4</name>
</gene>
<protein>
    <recommendedName>
        <fullName>C-X-C chemokine receptor type 4</fullName>
        <shortName>CXC-R4</shortName>
        <shortName>CXCR-4</shortName>
    </recommendedName>
    <alternativeName>
        <fullName evidence="6">Fusin</fullName>
    </alternativeName>
    <alternativeName>
        <fullName>Leukocyte-derived seven transmembrane domain receptor</fullName>
        <shortName>LESTR</shortName>
    </alternativeName>
    <alternativeName>
        <fullName>Stromal cell-derived factor 1 receptor</fullName>
        <shortName>SDF-1 receptor</shortName>
    </alternativeName>
    <cdAntigenName>CD184</cdAntigenName>
</protein>
<name>CXCR4_MACFA</name>
<comment type="function">
    <text evidence="2 3">Receptor for the C-X-C chemokine CXCL12/SDF-1 that transduces a signal by increasing intracellular calcium ion levels and enhancing MAPK1/MAPK3 activation. Involved in the AKT signaling cascade (By similarity). Plays a role in regulation of cell migration, e.g. during wound healing. Acts as a receptor for extracellular ubiquitin; leading to enhanced intracellular calcium ions and reduced cellular cAMP levels. Binds bacterial lipopolysaccharide (LPS) et mediates LPS-induced inflammatory response, including TNF secretion by monocytes (By similarity). Involved in hematopoiesis and in cardiac ventricular septum formation. Also plays an essential role in vascularization of the gastrointestinal tract, probably by regulating vascular branching and/or remodeling processes in endothelial cells. Involved in cerebellar development. In the CNS, could mediate hippocampal-neuron survival (By similarity).</text>
</comment>
<comment type="subunit">
    <text evidence="2">Monomer. Can form homodimers. Interacts with CD164. Interacts with ARRB2; the interaction is dependent on the C-terminal phosphorylation of CXCR4 and allows activation of MAPK1 and MAPK3. Interacts with ARR3; the interaction is dependent on the C-terminal phosphorylation of CXCR4 and modulates calcium mobilization. Interacts with RNF113A; the interaction, enhanced by CXCL12, promotes CXCR4 ubiquitination and subsequent degradation. Interacts (via the cytoplasmic C-terminal) with ITCH (via the WW domains I and II); the interaction, enhanced by CXCL12, promotes CXCR4 ubiquitination and leads to its degradation. Interacts with extracellular ubiquitin. Interacts with DBN1; this interaction is enhanced by antigenic stimulation. Following LPS binding, may form a complex with GDF5, HSP90AA1 and HSPA8.</text>
</comment>
<comment type="subcellular location">
    <subcellularLocation>
        <location evidence="2">Cell membrane</location>
        <topology evidence="2">Multi-pass membrane protein</topology>
    </subcellularLocation>
    <subcellularLocation>
        <location evidence="1">Cell junction</location>
    </subcellularLocation>
    <subcellularLocation>
        <location evidence="1">Early endosome</location>
    </subcellularLocation>
    <subcellularLocation>
        <location evidence="1">Late endosome</location>
    </subcellularLocation>
    <subcellularLocation>
        <location evidence="1">Lysosome</location>
    </subcellularLocation>
    <text evidence="1">In unstimulated cells, diffuse pattern on plasma membrane. On agonist stimulation, colocalizes with ITCH at the plasma membrane where it becomes ubiquitinated (By similarity). In the presence of antigen, distributes to the immunological synapse forming at the T-cell-APC contact area, where it localizes at the peripheral and distal supramolecular activation cluster (SMAC) (By similarity).</text>
</comment>
<comment type="PTM">
    <text evidence="2">Phosphorylated on agonist stimulation. Rapidly phosphorylated on serine and threonine residues in the C-terminal. Phosphorylation at Ser-324 and Ser-325 leads to recruitment of ITCH, ubiquitination and protein degradation.</text>
</comment>
<comment type="PTM">
    <text evidence="2">Ubiquitinated after ligand binding, leading to its degradation. Ubiquitinated by ITCH at the cell membrane on agonist stimulation. The ubiquitin-dependent mechanism, endosomal sorting complex required for transport (ESCRT), then targets CXCR4 for lysosomal degradation. This process is dependent also on prior Ser-/Thr-phosphorylation in the C-terminal of CXCR4. Also binding of ARRB1 to STAM negatively regulates CXCR4 sorting to lysosomes though modulating ubiquitination of SFR5S.</text>
</comment>
<comment type="PTM">
    <text evidence="2">Sulfation is required for efficient binding of CXCL12/SDF-1alpha and promotes its dimerization.</text>
</comment>
<comment type="PTM">
    <text evidence="2">O- and N-glycosylated. N-glycosylation can mask coreceptor function. The O-glycosylation chondroitin sulfate attachment does not affect interaction with CXCL12/SDF-1alpha nor its coreceptor activity.</text>
</comment>
<comment type="similarity">
    <text evidence="4">Belongs to the G-protein coupled receptor 1 family.</text>
</comment>
<keyword id="KW-0965">Cell junction</keyword>
<keyword id="KW-1003">Cell membrane</keyword>
<keyword id="KW-1015">Disulfide bond</keyword>
<keyword id="KW-0967">Endosome</keyword>
<keyword id="KW-0297">G-protein coupled receptor</keyword>
<keyword id="KW-0325">Glycoprotein</keyword>
<keyword id="KW-1017">Isopeptide bond</keyword>
<keyword id="KW-0458">Lysosome</keyword>
<keyword id="KW-0472">Membrane</keyword>
<keyword id="KW-0597">Phosphoprotein</keyword>
<keyword id="KW-0654">Proteoglycan</keyword>
<keyword id="KW-0675">Receptor</keyword>
<keyword id="KW-1185">Reference proteome</keyword>
<keyword id="KW-0765">Sulfation</keyword>
<keyword id="KW-0807">Transducer</keyword>
<keyword id="KW-0812">Transmembrane</keyword>
<keyword id="KW-1133">Transmembrane helix</keyword>
<keyword id="KW-0832">Ubl conjugation</keyword>
<evidence type="ECO:0000250" key="1"/>
<evidence type="ECO:0000250" key="2">
    <source>
        <dbReference type="UniProtKB" id="P61073"/>
    </source>
</evidence>
<evidence type="ECO:0000250" key="3">
    <source>
        <dbReference type="UniProtKB" id="P70658"/>
    </source>
</evidence>
<evidence type="ECO:0000255" key="4">
    <source>
        <dbReference type="PROSITE-ProRule" id="PRU00521"/>
    </source>
</evidence>
<evidence type="ECO:0000256" key="5">
    <source>
        <dbReference type="SAM" id="MobiDB-lite"/>
    </source>
</evidence>
<evidence type="ECO:0000303" key="6">
    <source ref="1"/>
</evidence>
<evidence type="ECO:0000305" key="7"/>
<reference key="1">
    <citation type="submission" date="1996-07" db="EMBL/GenBank/DDBJ databases">
        <title>Monkey CD4 and fusin are not species barrier for HIV-1 replication.</title>
        <authorList>
            <person name="Tatsumi M."/>
            <person name="Takahashi H."/>
        </authorList>
    </citation>
    <scope>NUCLEOTIDE SEQUENCE [MRNA]</scope>
</reference>
<reference key="2">
    <citation type="submission" date="2000-08" db="EMBL/GenBank/DDBJ databases">
        <title>Cloning, sequencing and expression of chemokine receptors, which may function as SIV/SHIV co-receptors, from cynomolgus macaque PBMCs.</title>
        <authorList>
            <person name="Wade-Evans A.M."/>
            <person name="Javan C."/>
            <person name="Jenkins A."/>
            <person name="Russell J."/>
            <person name="Sangster R."/>
            <person name="MacManus S."/>
        </authorList>
    </citation>
    <scope>NUCLEOTIDE SEQUENCE [MRNA]</scope>
</reference>